<reference key="1">
    <citation type="submission" date="2009-03" db="EMBL/GenBank/DDBJ databases">
        <title>Complete genome sequence of Edwardsiella ictaluri 93-146.</title>
        <authorList>
            <person name="Williams M.L."/>
            <person name="Gillaspy A.F."/>
            <person name="Dyer D.W."/>
            <person name="Thune R.L."/>
            <person name="Waldbieser G.C."/>
            <person name="Schuster S.C."/>
            <person name="Gipson J."/>
            <person name="Zaitshik J."/>
            <person name="Landry C."/>
            <person name="Lawrence M.L."/>
        </authorList>
    </citation>
    <scope>NUCLEOTIDE SEQUENCE [LARGE SCALE GENOMIC DNA]</scope>
    <source>
        <strain>93-146</strain>
    </source>
</reference>
<gene>
    <name evidence="1" type="primary">serS</name>
    <name type="ordered locus">NT01EI_2481</name>
</gene>
<accession>C5BE90</accession>
<feature type="chain" id="PRO_1000203755" description="Serine--tRNA ligase">
    <location>
        <begin position="1"/>
        <end position="430"/>
    </location>
</feature>
<feature type="region of interest" description="Disordered" evidence="2">
    <location>
        <begin position="44"/>
        <end position="65"/>
    </location>
</feature>
<feature type="binding site" evidence="1">
    <location>
        <begin position="237"/>
        <end position="239"/>
    </location>
    <ligand>
        <name>L-serine</name>
        <dbReference type="ChEBI" id="CHEBI:33384"/>
    </ligand>
</feature>
<feature type="binding site" evidence="1">
    <location>
        <begin position="268"/>
        <end position="270"/>
    </location>
    <ligand>
        <name>ATP</name>
        <dbReference type="ChEBI" id="CHEBI:30616"/>
    </ligand>
</feature>
<feature type="binding site" evidence="1">
    <location>
        <position position="291"/>
    </location>
    <ligand>
        <name>L-serine</name>
        <dbReference type="ChEBI" id="CHEBI:33384"/>
    </ligand>
</feature>
<feature type="binding site" evidence="1">
    <location>
        <begin position="355"/>
        <end position="358"/>
    </location>
    <ligand>
        <name>ATP</name>
        <dbReference type="ChEBI" id="CHEBI:30616"/>
    </ligand>
</feature>
<feature type="binding site" evidence="1">
    <location>
        <position position="391"/>
    </location>
    <ligand>
        <name>L-serine</name>
        <dbReference type="ChEBI" id="CHEBI:33384"/>
    </ligand>
</feature>
<dbReference type="EC" id="6.1.1.11" evidence="1"/>
<dbReference type="EMBL" id="CP001600">
    <property type="protein sequence ID" value="ACR69651.1"/>
    <property type="molecule type" value="Genomic_DNA"/>
</dbReference>
<dbReference type="RefSeq" id="WP_015871765.1">
    <property type="nucleotide sequence ID" value="NZ_CP169062.1"/>
</dbReference>
<dbReference type="SMR" id="C5BE90"/>
<dbReference type="STRING" id="67780.B6E78_04530"/>
<dbReference type="GeneID" id="69539396"/>
<dbReference type="KEGG" id="eic:NT01EI_2481"/>
<dbReference type="PATRIC" id="fig|634503.3.peg.2204"/>
<dbReference type="HOGENOM" id="CLU_023797_1_1_6"/>
<dbReference type="OrthoDB" id="9804647at2"/>
<dbReference type="UniPathway" id="UPA00906">
    <property type="reaction ID" value="UER00895"/>
</dbReference>
<dbReference type="Proteomes" id="UP000001485">
    <property type="component" value="Chromosome"/>
</dbReference>
<dbReference type="GO" id="GO:0005737">
    <property type="term" value="C:cytoplasm"/>
    <property type="evidence" value="ECO:0007669"/>
    <property type="project" value="UniProtKB-SubCell"/>
</dbReference>
<dbReference type="GO" id="GO:0005524">
    <property type="term" value="F:ATP binding"/>
    <property type="evidence" value="ECO:0007669"/>
    <property type="project" value="UniProtKB-UniRule"/>
</dbReference>
<dbReference type="GO" id="GO:0004828">
    <property type="term" value="F:serine-tRNA ligase activity"/>
    <property type="evidence" value="ECO:0007669"/>
    <property type="project" value="UniProtKB-UniRule"/>
</dbReference>
<dbReference type="GO" id="GO:0016260">
    <property type="term" value="P:selenocysteine biosynthetic process"/>
    <property type="evidence" value="ECO:0007669"/>
    <property type="project" value="UniProtKB-UniRule"/>
</dbReference>
<dbReference type="GO" id="GO:0006434">
    <property type="term" value="P:seryl-tRNA aminoacylation"/>
    <property type="evidence" value="ECO:0007669"/>
    <property type="project" value="UniProtKB-UniRule"/>
</dbReference>
<dbReference type="CDD" id="cd00770">
    <property type="entry name" value="SerRS_core"/>
    <property type="match status" value="1"/>
</dbReference>
<dbReference type="FunFam" id="1.10.287.40:FF:000001">
    <property type="entry name" value="Serine--tRNA ligase"/>
    <property type="match status" value="1"/>
</dbReference>
<dbReference type="FunFam" id="3.30.930.10:FF:000018">
    <property type="entry name" value="Serine--tRNA ligase"/>
    <property type="match status" value="1"/>
</dbReference>
<dbReference type="Gene3D" id="3.30.930.10">
    <property type="entry name" value="Bira Bifunctional Protein, Domain 2"/>
    <property type="match status" value="1"/>
</dbReference>
<dbReference type="Gene3D" id="1.10.287.40">
    <property type="entry name" value="Serine-tRNA synthetase, tRNA binding domain"/>
    <property type="match status" value="1"/>
</dbReference>
<dbReference type="HAMAP" id="MF_00176">
    <property type="entry name" value="Ser_tRNA_synth_type1"/>
    <property type="match status" value="1"/>
</dbReference>
<dbReference type="InterPro" id="IPR002314">
    <property type="entry name" value="aa-tRNA-synt_IIb"/>
</dbReference>
<dbReference type="InterPro" id="IPR006195">
    <property type="entry name" value="aa-tRNA-synth_II"/>
</dbReference>
<dbReference type="InterPro" id="IPR045864">
    <property type="entry name" value="aa-tRNA-synth_II/BPL/LPL"/>
</dbReference>
<dbReference type="InterPro" id="IPR002317">
    <property type="entry name" value="Ser-tRNA-ligase_type_1"/>
</dbReference>
<dbReference type="InterPro" id="IPR015866">
    <property type="entry name" value="Ser-tRNA-synth_1_N"/>
</dbReference>
<dbReference type="InterPro" id="IPR042103">
    <property type="entry name" value="SerRS_1_N_sf"/>
</dbReference>
<dbReference type="InterPro" id="IPR033729">
    <property type="entry name" value="SerRS_core"/>
</dbReference>
<dbReference type="InterPro" id="IPR010978">
    <property type="entry name" value="tRNA-bd_arm"/>
</dbReference>
<dbReference type="NCBIfam" id="TIGR00414">
    <property type="entry name" value="serS"/>
    <property type="match status" value="1"/>
</dbReference>
<dbReference type="PANTHER" id="PTHR43697:SF1">
    <property type="entry name" value="SERINE--TRNA LIGASE"/>
    <property type="match status" value="1"/>
</dbReference>
<dbReference type="PANTHER" id="PTHR43697">
    <property type="entry name" value="SERYL-TRNA SYNTHETASE"/>
    <property type="match status" value="1"/>
</dbReference>
<dbReference type="Pfam" id="PF02403">
    <property type="entry name" value="Seryl_tRNA_N"/>
    <property type="match status" value="1"/>
</dbReference>
<dbReference type="Pfam" id="PF00587">
    <property type="entry name" value="tRNA-synt_2b"/>
    <property type="match status" value="1"/>
</dbReference>
<dbReference type="PIRSF" id="PIRSF001529">
    <property type="entry name" value="Ser-tRNA-synth_IIa"/>
    <property type="match status" value="1"/>
</dbReference>
<dbReference type="PRINTS" id="PR00981">
    <property type="entry name" value="TRNASYNTHSER"/>
</dbReference>
<dbReference type="SUPFAM" id="SSF55681">
    <property type="entry name" value="Class II aaRS and biotin synthetases"/>
    <property type="match status" value="1"/>
</dbReference>
<dbReference type="SUPFAM" id="SSF46589">
    <property type="entry name" value="tRNA-binding arm"/>
    <property type="match status" value="1"/>
</dbReference>
<dbReference type="PROSITE" id="PS50862">
    <property type="entry name" value="AA_TRNA_LIGASE_II"/>
    <property type="match status" value="1"/>
</dbReference>
<name>SYS_EDWI9</name>
<comment type="function">
    <text evidence="1">Catalyzes the attachment of serine to tRNA(Ser). Is also able to aminoacylate tRNA(Sec) with serine, to form the misacylated tRNA L-seryl-tRNA(Sec), which will be further converted into selenocysteinyl-tRNA(Sec).</text>
</comment>
<comment type="catalytic activity">
    <reaction evidence="1">
        <text>tRNA(Ser) + L-serine + ATP = L-seryl-tRNA(Ser) + AMP + diphosphate + H(+)</text>
        <dbReference type="Rhea" id="RHEA:12292"/>
        <dbReference type="Rhea" id="RHEA-COMP:9669"/>
        <dbReference type="Rhea" id="RHEA-COMP:9703"/>
        <dbReference type="ChEBI" id="CHEBI:15378"/>
        <dbReference type="ChEBI" id="CHEBI:30616"/>
        <dbReference type="ChEBI" id="CHEBI:33019"/>
        <dbReference type="ChEBI" id="CHEBI:33384"/>
        <dbReference type="ChEBI" id="CHEBI:78442"/>
        <dbReference type="ChEBI" id="CHEBI:78533"/>
        <dbReference type="ChEBI" id="CHEBI:456215"/>
        <dbReference type="EC" id="6.1.1.11"/>
    </reaction>
</comment>
<comment type="catalytic activity">
    <reaction evidence="1">
        <text>tRNA(Sec) + L-serine + ATP = L-seryl-tRNA(Sec) + AMP + diphosphate + H(+)</text>
        <dbReference type="Rhea" id="RHEA:42580"/>
        <dbReference type="Rhea" id="RHEA-COMP:9742"/>
        <dbReference type="Rhea" id="RHEA-COMP:10128"/>
        <dbReference type="ChEBI" id="CHEBI:15378"/>
        <dbReference type="ChEBI" id="CHEBI:30616"/>
        <dbReference type="ChEBI" id="CHEBI:33019"/>
        <dbReference type="ChEBI" id="CHEBI:33384"/>
        <dbReference type="ChEBI" id="CHEBI:78442"/>
        <dbReference type="ChEBI" id="CHEBI:78533"/>
        <dbReference type="ChEBI" id="CHEBI:456215"/>
        <dbReference type="EC" id="6.1.1.11"/>
    </reaction>
</comment>
<comment type="pathway">
    <text evidence="1">Aminoacyl-tRNA biosynthesis; selenocysteinyl-tRNA(Sec) biosynthesis; L-seryl-tRNA(Sec) from L-serine and tRNA(Sec): step 1/1.</text>
</comment>
<comment type="subunit">
    <text evidence="1">Homodimer. The tRNA molecule binds across the dimer.</text>
</comment>
<comment type="subcellular location">
    <subcellularLocation>
        <location evidence="1">Cytoplasm</location>
    </subcellularLocation>
</comment>
<comment type="domain">
    <text evidence="1">Consists of two distinct domains, a catalytic core and a N-terminal extension that is involved in tRNA binding.</text>
</comment>
<comment type="similarity">
    <text evidence="1">Belongs to the class-II aminoacyl-tRNA synthetase family. Type-1 seryl-tRNA synthetase subfamily.</text>
</comment>
<organism>
    <name type="scientific">Edwardsiella ictaluri (strain 93-146)</name>
    <dbReference type="NCBI Taxonomy" id="634503"/>
    <lineage>
        <taxon>Bacteria</taxon>
        <taxon>Pseudomonadati</taxon>
        <taxon>Pseudomonadota</taxon>
        <taxon>Gammaproteobacteria</taxon>
        <taxon>Enterobacterales</taxon>
        <taxon>Hafniaceae</taxon>
        <taxon>Edwardsiella</taxon>
    </lineage>
</organism>
<evidence type="ECO:0000255" key="1">
    <source>
        <dbReference type="HAMAP-Rule" id="MF_00176"/>
    </source>
</evidence>
<evidence type="ECO:0000256" key="2">
    <source>
        <dbReference type="SAM" id="MobiDB-lite"/>
    </source>
</evidence>
<proteinExistence type="inferred from homology"/>
<keyword id="KW-0030">Aminoacyl-tRNA synthetase</keyword>
<keyword id="KW-0067">ATP-binding</keyword>
<keyword id="KW-0963">Cytoplasm</keyword>
<keyword id="KW-0436">Ligase</keyword>
<keyword id="KW-0547">Nucleotide-binding</keyword>
<keyword id="KW-0648">Protein biosynthesis</keyword>
<sequence>MLDPNLLRNELDAVAEKLARRGYKLDVDTLRQQEERRKVLQVETESLQAERNSRSKSIGAAKARGEDIEPLRREVNELGEKLDAAKAELDRLQQEIRDLALSIPNLPDDSVPVGRDENDNQEICRWGEPRSYNFDVRDHVTLGEMAEGLDFAAAVKLTGARFVVMKGQIARMHRALAQFMLDLHTEQHGYLETYVPYLVNHDTLYGTGQLPKFGADLFHTRPLEEEADSSIYALIPTAEVPVTNLVRGEILEESALPLKMTAHTPCFRSEAGSYGRDTRGLIRMHQFDKVELVQIVRPEDSMAALEELTAHAEKVLQLLNLPYRKVLLCTGDMGFGSSKTYDLEVWVPAQNTYREISSCSNMWDFQARRMQARYRSKDDKKPRLVHTLNGSGLAVGRTLVAVMENYQQADGRIQVPEALRPYMNGLEYIG</sequence>
<protein>
    <recommendedName>
        <fullName evidence="1">Serine--tRNA ligase</fullName>
        <ecNumber evidence="1">6.1.1.11</ecNumber>
    </recommendedName>
    <alternativeName>
        <fullName evidence="1">Seryl-tRNA synthetase</fullName>
        <shortName evidence="1">SerRS</shortName>
    </alternativeName>
    <alternativeName>
        <fullName evidence="1">Seryl-tRNA(Ser/Sec) synthetase</fullName>
    </alternativeName>
</protein>